<sequence length="470" mass="53836">MNARIAELLHNYLGRPPSLSEYHMLKLQHRNIQKIIAFNKDIFISLIKKNKKKFFSDIDLTSSEIKTSVLSYFSKQRDTYSIGKLYTIIELQTILVSTYTDVLGVLTLKGPDMFPSSTRYDIKSIKQIATSALHAMNVAVLSDKVMGRHNVSPLVSNVNALMEEYLRRHNKNCICYGSYSLHLLNPEVKYGDIDILQTNSRTFLIDLAFLIKFITGSNVILLKVPYLKNYMVLKDKDDNHIIDSFNIRQETMQVIPKVLIDNIYIVDPALQLMSMFKMFSQIDRLEDLARNPEKLTVRLATLMEYVRVKYGVILNGESNHMPMKGVLDKDKRIIVMDTSGYNFSFKKCFVYMDESSLSSDILDLNADDAVDFENVSNSAYLVKGDVLYTYFSNTILLSDPDTIHEISNKAMSAHILIYQILTGNDIRQPLSDLVNSLMYNEKVLIHEVIPRDKKTGKHGIIDIEKDIITH</sequence>
<organism>
    <name type="scientific">Myxoma virus (strain Lausanne)</name>
    <name type="common">MYXV</name>
    <dbReference type="NCBI Taxonomy" id="31530"/>
    <lineage>
        <taxon>Viruses</taxon>
        <taxon>Varidnaviria</taxon>
        <taxon>Bamfordvirae</taxon>
        <taxon>Nucleocytoviricota</taxon>
        <taxon>Pokkesviricetes</taxon>
        <taxon>Chitovirales</taxon>
        <taxon>Poxviridae</taxon>
        <taxon>Chordopoxvirinae</taxon>
        <taxon>Leporipoxvirus</taxon>
        <taxon>Myxoma virus</taxon>
    </lineage>
</organism>
<feature type="chain" id="PRO_0000308936" description="Poly(A) polymerase catalytic subunit">
    <location>
        <begin position="1"/>
        <end position="470"/>
    </location>
</feature>
<feature type="active site" evidence="1">
    <location>
        <position position="192"/>
    </location>
</feature>
<feature type="active site" evidence="1">
    <location>
        <position position="194"/>
    </location>
</feature>
<protein>
    <recommendedName>
        <fullName>Poly(A) polymerase catalytic subunit</fullName>
        <ecNumber>2.7.7.19</ecNumber>
    </recommendedName>
    <alternativeName>
        <fullName>Poly(A) polymerase large subunit</fullName>
        <shortName>PAP-L</shortName>
    </alternativeName>
</protein>
<name>PAP1_MYXVL</name>
<accession>Q9Q8R9</accession>
<gene>
    <name type="primary">PAPL</name>
    <name type="ordered locus">m027L</name>
</gene>
<keyword id="KW-0067">ATP-binding</keyword>
<keyword id="KW-0507">mRNA processing</keyword>
<keyword id="KW-0547">Nucleotide-binding</keyword>
<keyword id="KW-1185">Reference proteome</keyword>
<keyword id="KW-0804">Transcription</keyword>
<keyword id="KW-0808">Transferase</keyword>
<proteinExistence type="inferred from homology"/>
<reference key="1">
    <citation type="journal article" date="1999" name="Virology">
        <title>The complete DNA sequence of myxoma virus.</title>
        <authorList>
            <person name="Cameron C."/>
            <person name="Hota-Mitchell S."/>
            <person name="Chen L."/>
            <person name="Barrett J.W."/>
            <person name="Cao J.-X."/>
            <person name="Macaulay C."/>
            <person name="Willer D.O."/>
            <person name="Evans D.H."/>
            <person name="McFadden G."/>
        </authorList>
    </citation>
    <scope>NUCLEOTIDE SEQUENCE [LARGE SCALE GENOMIC DNA]</scope>
</reference>
<organismHost>
    <name type="scientific">Oryctolagus cuniculus</name>
    <name type="common">Rabbit</name>
    <dbReference type="NCBI Taxonomy" id="9986"/>
</organismHost>
<comment type="function">
    <text>Polymerase that creates the 3'-poly(A) tail of mRNA's.</text>
</comment>
<comment type="catalytic activity">
    <reaction>
        <text>RNA(n) + ATP = RNA(n)-3'-adenine ribonucleotide + diphosphate</text>
        <dbReference type="Rhea" id="RHEA:11332"/>
        <dbReference type="Rhea" id="RHEA-COMP:14527"/>
        <dbReference type="Rhea" id="RHEA-COMP:17347"/>
        <dbReference type="ChEBI" id="CHEBI:30616"/>
        <dbReference type="ChEBI" id="CHEBI:33019"/>
        <dbReference type="ChEBI" id="CHEBI:140395"/>
        <dbReference type="ChEBI" id="CHEBI:173115"/>
        <dbReference type="EC" id="2.7.7.19"/>
    </reaction>
</comment>
<comment type="subunit">
    <text evidence="1">Heterodimer of a large (catalytic) subunit and a small (regulatory) subunit.</text>
</comment>
<comment type="similarity">
    <text evidence="2">Belongs to the poxviridae poly(A) polymerase catalytic subunit family.</text>
</comment>
<evidence type="ECO:0000250" key="1"/>
<evidence type="ECO:0000305" key="2"/>
<dbReference type="EC" id="2.7.7.19"/>
<dbReference type="EMBL" id="AF170726">
    <property type="protein sequence ID" value="AAF14915.1"/>
    <property type="molecule type" value="Genomic_DNA"/>
</dbReference>
<dbReference type="RefSeq" id="NP_051741.1">
    <property type="nucleotide sequence ID" value="NC_001132.2"/>
</dbReference>
<dbReference type="SMR" id="Q9Q8R9"/>
<dbReference type="GeneID" id="932202"/>
<dbReference type="KEGG" id="vg:932202"/>
<dbReference type="Proteomes" id="UP000000867">
    <property type="component" value="Segment"/>
</dbReference>
<dbReference type="GO" id="GO:0005524">
    <property type="term" value="F:ATP binding"/>
    <property type="evidence" value="ECO:0007669"/>
    <property type="project" value="UniProtKB-KW"/>
</dbReference>
<dbReference type="GO" id="GO:1990817">
    <property type="term" value="F:poly(A) RNA polymerase activity"/>
    <property type="evidence" value="ECO:0007669"/>
    <property type="project" value="UniProtKB-EC"/>
</dbReference>
<dbReference type="GO" id="GO:0006397">
    <property type="term" value="P:mRNA processing"/>
    <property type="evidence" value="ECO:0007669"/>
    <property type="project" value="UniProtKB-KW"/>
</dbReference>
<dbReference type="CDD" id="cd20919">
    <property type="entry name" value="polyA_pol_Pox"/>
    <property type="match status" value="1"/>
</dbReference>
<dbReference type="Gene3D" id="1.20.1270.320">
    <property type="entry name" value="Poxvirus poly(A) polymerase, N domain"/>
    <property type="match status" value="1"/>
</dbReference>
<dbReference type="Gene3D" id="3.30.460.60">
    <property type="entry name" value="Poxvirus poly(A) polymerase, nucleotidyltransferase domain"/>
    <property type="match status" value="1"/>
</dbReference>
<dbReference type="InterPro" id="IPR004976">
    <property type="entry name" value="PolyA_pol_cat_Poxvir"/>
</dbReference>
<dbReference type="InterPro" id="IPR037265">
    <property type="entry name" value="PolyA_pol_cat_sf"/>
</dbReference>
<dbReference type="InterPro" id="IPR024231">
    <property type="entry name" value="PolyA_pol_nucTrfase_Poxvir"/>
</dbReference>
<dbReference type="InterPro" id="IPR038419">
    <property type="entry name" value="PolyA_pol_nucTrfase_sf_Poxvir"/>
</dbReference>
<dbReference type="InterPro" id="IPR024397">
    <property type="entry name" value="Poxvirus_polyA_pol_cat_C"/>
</dbReference>
<dbReference type="InterPro" id="IPR024398">
    <property type="entry name" value="Poxvirus_polyA_pol_cat_N"/>
</dbReference>
<dbReference type="InterPro" id="IPR038337">
    <property type="entry name" value="Poxvirus_polyA_pol_cat_N_sf"/>
</dbReference>
<dbReference type="Pfam" id="PF03296">
    <property type="entry name" value="Pox_polyA_pol"/>
    <property type="match status" value="1"/>
</dbReference>
<dbReference type="Pfam" id="PF12629">
    <property type="entry name" value="Pox_polyA_pol_C"/>
    <property type="match status" value="1"/>
</dbReference>
<dbReference type="Pfam" id="PF12630">
    <property type="entry name" value="Pox_polyA_pol_N"/>
    <property type="match status" value="1"/>
</dbReference>
<dbReference type="PIRSF" id="PIRSF015693">
    <property type="entry name" value="VAC-48L_nuct"/>
    <property type="match status" value="1"/>
</dbReference>
<dbReference type="SUPFAM" id="SSF160957">
    <property type="entry name" value="Poly(A) polymerase catalytic subunit-like"/>
    <property type="match status" value="1"/>
</dbReference>